<sequence length="330" mass="36540">MPLAAAVAASAVVPPRPPPPPPRRARPLRSFTGLILTRDLAALTVARCAPSPPAPAAEAEAEAVAVDEAPPAKPRPRRYPRQYPGEAVGVAEEMRFVAMRLRNPKRTTLKMDDTGAEEEVGDGVSEDASASEEEEEEEDDDDVVEEEEEGAGLEGEWMPSMEGFVKYLVDSKLVFDTVERIVAESTDVAYVYFRKSGLERSARITKDLEWFGGQGIAVPEPSTAGSTYATYLTELAESNAPAFLSHYYNIYFAHTTGGVAIGNKISKKILEGRELEFYKWDSDVELLLKDTREKLNELSKHWSRKDRNLCLKEAAKCFQHLGRIVRLIIL</sequence>
<evidence type="ECO:0000250" key="1"/>
<evidence type="ECO:0000255" key="2"/>
<evidence type="ECO:0000256" key="3">
    <source>
        <dbReference type="SAM" id="MobiDB-lite"/>
    </source>
</evidence>
<evidence type="ECO:0000305" key="4"/>
<reference key="1">
    <citation type="journal article" date="2005" name="Genome Res.">
        <title>Sequence, annotation, and analysis of synteny between rice chromosome 3 and diverged grass species.</title>
        <authorList>
            <consortium name="The rice chromosome 3 sequencing consortium"/>
            <person name="Buell C.R."/>
            <person name="Yuan Q."/>
            <person name="Ouyang S."/>
            <person name="Liu J."/>
            <person name="Zhu W."/>
            <person name="Wang A."/>
            <person name="Maiti R."/>
            <person name="Haas B."/>
            <person name="Wortman J."/>
            <person name="Pertea M."/>
            <person name="Jones K.M."/>
            <person name="Kim M."/>
            <person name="Overton L."/>
            <person name="Tsitrin T."/>
            <person name="Fadrosh D."/>
            <person name="Bera J."/>
            <person name="Weaver B."/>
            <person name="Jin S."/>
            <person name="Johri S."/>
            <person name="Reardon M."/>
            <person name="Webb K."/>
            <person name="Hill J."/>
            <person name="Moffat K."/>
            <person name="Tallon L."/>
            <person name="Van Aken S."/>
            <person name="Lewis M."/>
            <person name="Utterback T."/>
            <person name="Feldblyum T."/>
            <person name="Zismann V."/>
            <person name="Iobst S."/>
            <person name="Hsiao J."/>
            <person name="de Vazeille A.R."/>
            <person name="Salzberg S.L."/>
            <person name="White O."/>
            <person name="Fraser C.M."/>
            <person name="Yu Y."/>
            <person name="Kim H."/>
            <person name="Rambo T."/>
            <person name="Currie J."/>
            <person name="Collura K."/>
            <person name="Kernodle-Thompson S."/>
            <person name="Wei F."/>
            <person name="Kudrna K."/>
            <person name="Ammiraju J.S.S."/>
            <person name="Luo M."/>
            <person name="Goicoechea J.L."/>
            <person name="Wing R.A."/>
            <person name="Henry D."/>
            <person name="Oates R."/>
            <person name="Palmer M."/>
            <person name="Pries G."/>
            <person name="Saski C."/>
            <person name="Simmons J."/>
            <person name="Soderlund C."/>
            <person name="Nelson W."/>
            <person name="de la Bastide M."/>
            <person name="Spiegel L."/>
            <person name="Nascimento L."/>
            <person name="Huang E."/>
            <person name="Preston R."/>
            <person name="Zutavern T."/>
            <person name="Palmer L."/>
            <person name="O'Shaughnessy A."/>
            <person name="Dike S."/>
            <person name="McCombie W.R."/>
            <person name="Minx P."/>
            <person name="Cordum H."/>
            <person name="Wilson R."/>
            <person name="Jin W."/>
            <person name="Lee H.R."/>
            <person name="Jiang J."/>
            <person name="Jackson S."/>
        </authorList>
    </citation>
    <scope>NUCLEOTIDE SEQUENCE [LARGE SCALE GENOMIC DNA]</scope>
    <source>
        <strain>cv. Nipponbare</strain>
    </source>
</reference>
<reference key="2">
    <citation type="journal article" date="2005" name="Nature">
        <title>The map-based sequence of the rice genome.</title>
        <authorList>
            <consortium name="International rice genome sequencing project (IRGSP)"/>
        </authorList>
    </citation>
    <scope>NUCLEOTIDE SEQUENCE [LARGE SCALE GENOMIC DNA]</scope>
    <source>
        <strain>cv. Nipponbare</strain>
    </source>
</reference>
<reference key="3">
    <citation type="journal article" date="2008" name="Nucleic Acids Res.">
        <title>The rice annotation project database (RAP-DB): 2008 update.</title>
        <authorList>
            <consortium name="The rice annotation project (RAP)"/>
        </authorList>
    </citation>
    <scope>GENOME REANNOTATION</scope>
    <source>
        <strain>cv. Nipponbare</strain>
    </source>
</reference>
<reference key="4">
    <citation type="journal article" date="2013" name="Rice">
        <title>Improvement of the Oryza sativa Nipponbare reference genome using next generation sequence and optical map data.</title>
        <authorList>
            <person name="Kawahara Y."/>
            <person name="de la Bastide M."/>
            <person name="Hamilton J.P."/>
            <person name="Kanamori H."/>
            <person name="McCombie W.R."/>
            <person name="Ouyang S."/>
            <person name="Schwartz D.C."/>
            <person name="Tanaka T."/>
            <person name="Wu J."/>
            <person name="Zhou S."/>
            <person name="Childs K.L."/>
            <person name="Davidson R.M."/>
            <person name="Lin H."/>
            <person name="Quesada-Ocampo L."/>
            <person name="Vaillancourt B."/>
            <person name="Sakai H."/>
            <person name="Lee S.S."/>
            <person name="Kim J."/>
            <person name="Numa H."/>
            <person name="Itoh T."/>
            <person name="Buell C.R."/>
            <person name="Matsumoto T."/>
        </authorList>
    </citation>
    <scope>GENOME REANNOTATION</scope>
    <source>
        <strain>cv. Nipponbare</strain>
    </source>
</reference>
<reference key="5">
    <citation type="journal article" date="2003" name="Science">
        <title>Collection, mapping, and annotation of over 28,000 cDNA clones from japonica rice.</title>
        <authorList>
            <consortium name="The rice full-length cDNA consortium"/>
        </authorList>
    </citation>
    <scope>NUCLEOTIDE SEQUENCE [LARGE SCALE MRNA]</scope>
    <source>
        <strain>cv. Nipponbare</strain>
    </source>
</reference>
<protein>
    <recommendedName>
        <fullName>Probable inactive heme oxygenase 2, chloroplastic</fullName>
    </recommendedName>
</protein>
<dbReference type="EMBL" id="AC079853">
    <property type="protein sequence ID" value="AAK52555.1"/>
    <property type="status" value="ALT_SEQ"/>
    <property type="molecule type" value="Genomic_DNA"/>
</dbReference>
<dbReference type="EMBL" id="AC097279">
    <property type="protein sequence ID" value="AAP04188.1"/>
    <property type="status" value="ALT_SEQ"/>
    <property type="molecule type" value="Genomic_DNA"/>
</dbReference>
<dbReference type="EMBL" id="DP000009">
    <property type="protein sequence ID" value="ABF96412.1"/>
    <property type="molecule type" value="Genomic_DNA"/>
</dbReference>
<dbReference type="EMBL" id="DP000009">
    <property type="protein sequence ID" value="ABF96413.1"/>
    <property type="status" value="ALT_SEQ"/>
    <property type="molecule type" value="Genomic_DNA"/>
</dbReference>
<dbReference type="EMBL" id="AP008209">
    <property type="protein sequence ID" value="BAF12204.1"/>
    <property type="molecule type" value="Genomic_DNA"/>
</dbReference>
<dbReference type="EMBL" id="AP014959">
    <property type="protein sequence ID" value="BAS84553.1"/>
    <property type="molecule type" value="Genomic_DNA"/>
</dbReference>
<dbReference type="EMBL" id="AK073283">
    <property type="protein sequence ID" value="BAG93378.1"/>
    <property type="molecule type" value="mRNA"/>
</dbReference>
<dbReference type="RefSeq" id="XP_015628243.1">
    <property type="nucleotide sequence ID" value="XM_015772757.1"/>
</dbReference>
<dbReference type="SMR" id="Q10K62"/>
<dbReference type="FunCoup" id="Q10K62">
    <property type="interactions" value="763"/>
</dbReference>
<dbReference type="STRING" id="39947.Q10K62"/>
<dbReference type="PaxDb" id="39947-Q10K62"/>
<dbReference type="EnsemblPlants" id="Os03t0395000-01">
    <property type="protein sequence ID" value="Os03t0395000-01"/>
    <property type="gene ID" value="Os03g0395000"/>
</dbReference>
<dbReference type="Gramene" id="Os03t0395000-01">
    <property type="protein sequence ID" value="Os03t0395000-01"/>
    <property type="gene ID" value="Os03g0395000"/>
</dbReference>
<dbReference type="KEGG" id="dosa:Os03g0395000"/>
<dbReference type="eggNOG" id="KOG4480">
    <property type="taxonomic scope" value="Eukaryota"/>
</dbReference>
<dbReference type="HOGENOM" id="CLU_063325_0_0_1"/>
<dbReference type="InParanoid" id="Q10K62"/>
<dbReference type="OMA" id="GLEGEWM"/>
<dbReference type="OrthoDB" id="652091at2759"/>
<dbReference type="Proteomes" id="UP000000763">
    <property type="component" value="Chromosome 3"/>
</dbReference>
<dbReference type="Proteomes" id="UP000059680">
    <property type="component" value="Chromosome 3"/>
</dbReference>
<dbReference type="ExpressionAtlas" id="Q10K62">
    <property type="expression patterns" value="baseline and differential"/>
</dbReference>
<dbReference type="GO" id="GO:0009507">
    <property type="term" value="C:chloroplast"/>
    <property type="evidence" value="ECO:0007669"/>
    <property type="project" value="UniProtKB-SubCell"/>
</dbReference>
<dbReference type="GO" id="GO:0004392">
    <property type="term" value="F:heme oxygenase (decyclizing) activity"/>
    <property type="evidence" value="ECO:0007669"/>
    <property type="project" value="InterPro"/>
</dbReference>
<dbReference type="GO" id="GO:0006788">
    <property type="term" value="P:heme oxidation"/>
    <property type="evidence" value="ECO:0007669"/>
    <property type="project" value="InterPro"/>
</dbReference>
<dbReference type="GO" id="GO:0015979">
    <property type="term" value="P:photosynthesis"/>
    <property type="evidence" value="ECO:0007669"/>
    <property type="project" value="UniProtKB-KW"/>
</dbReference>
<dbReference type="GO" id="GO:0010024">
    <property type="term" value="P:phytochromobilin biosynthetic process"/>
    <property type="evidence" value="ECO:0007669"/>
    <property type="project" value="EnsemblPlants"/>
</dbReference>
<dbReference type="CDD" id="cd19165">
    <property type="entry name" value="HemeO"/>
    <property type="match status" value="1"/>
</dbReference>
<dbReference type="Gene3D" id="1.20.910.10">
    <property type="entry name" value="Heme oxygenase-like"/>
    <property type="match status" value="1"/>
</dbReference>
<dbReference type="InterPro" id="IPR002051">
    <property type="entry name" value="Haem_Oase"/>
</dbReference>
<dbReference type="InterPro" id="IPR016053">
    <property type="entry name" value="Haem_Oase-like"/>
</dbReference>
<dbReference type="InterPro" id="IPR016084">
    <property type="entry name" value="Haem_Oase-like_multi-hlx"/>
</dbReference>
<dbReference type="InterPro" id="IPR016951">
    <property type="entry name" value="Haem_Oase_decyc_pln"/>
</dbReference>
<dbReference type="PANTHER" id="PTHR35703">
    <property type="entry name" value="HEME OXYGENASE 1, CHLOROPLASTIC-RELATED"/>
    <property type="match status" value="1"/>
</dbReference>
<dbReference type="PANTHER" id="PTHR35703:SF1">
    <property type="entry name" value="INACTIVE HEME OXYGENASE 2, CHLOROPLASTIC-RELATED"/>
    <property type="match status" value="1"/>
</dbReference>
<dbReference type="Pfam" id="PF01126">
    <property type="entry name" value="Heme_oxygenase"/>
    <property type="match status" value="1"/>
</dbReference>
<dbReference type="PIRSF" id="PIRSF030219">
    <property type="entry name" value="Heme_Oase_decyc_pln"/>
    <property type="match status" value="1"/>
</dbReference>
<dbReference type="SUPFAM" id="SSF48613">
    <property type="entry name" value="Heme oxygenase-like"/>
    <property type="match status" value="1"/>
</dbReference>
<keyword id="KW-0150">Chloroplast</keyword>
<keyword id="KW-0602">Photosynthesis</keyword>
<keyword id="KW-0934">Plastid</keyword>
<keyword id="KW-1185">Reference proteome</keyword>
<keyword id="KW-0809">Transit peptide</keyword>
<comment type="function">
    <text evidence="1">Probable inactive heme oxygenase that may play a role in the regulation of phytochrome assembly and photomorphogenesis.</text>
</comment>
<comment type="subcellular location">
    <subcellularLocation>
        <location>Plastid</location>
        <location>Chloroplast</location>
    </subcellularLocation>
</comment>
<comment type="similarity">
    <text evidence="4">Belongs to the heme oxygenase family.</text>
</comment>
<comment type="caution">
    <text evidence="4">Lacks the conserved His residue involved in heme iron binding and essential for heme oxygenase activity. Its enzyme activity is therefore unsure.</text>
</comment>
<comment type="sequence caution" evidence="4">
    <conflict type="erroneous gene model prediction">
        <sequence resource="EMBL-CDS" id="AAK52555"/>
    </conflict>
</comment>
<comment type="sequence caution" evidence="4">
    <conflict type="erroneous gene model prediction">
        <sequence resource="EMBL-CDS" id="AAP04188"/>
    </conflict>
</comment>
<comment type="sequence caution" evidence="4">
    <conflict type="erroneous gene model prediction">
        <sequence resource="EMBL-CDS" id="ABF96413"/>
    </conflict>
</comment>
<name>HMOX2_ORYSJ</name>
<feature type="transit peptide" description="Chloroplast" evidence="2">
    <location>
        <begin position="1"/>
        <end position="47"/>
    </location>
</feature>
<feature type="chain" id="PRO_0000412190" description="Probable inactive heme oxygenase 2, chloroplastic">
    <location>
        <begin position="48"/>
        <end position="330"/>
    </location>
</feature>
<feature type="region of interest" description="Disordered" evidence="3">
    <location>
        <begin position="1"/>
        <end position="27"/>
    </location>
</feature>
<feature type="region of interest" description="Disordered" evidence="3">
    <location>
        <begin position="50"/>
        <end position="82"/>
    </location>
</feature>
<feature type="region of interest" description="Disordered" evidence="3">
    <location>
        <begin position="107"/>
        <end position="156"/>
    </location>
</feature>
<feature type="compositionally biased region" description="Low complexity" evidence="3">
    <location>
        <begin position="1"/>
        <end position="13"/>
    </location>
</feature>
<feature type="compositionally biased region" description="Low complexity" evidence="3">
    <location>
        <begin position="56"/>
        <end position="69"/>
    </location>
</feature>
<feature type="compositionally biased region" description="Acidic residues" evidence="3">
    <location>
        <begin position="114"/>
        <end position="151"/>
    </location>
</feature>
<accession>Q10K62</accession>
<accession>Q10K63</accession>
<accession>Q84QZ0</accession>
<accession>Q94LH4</accession>
<gene>
    <name type="primary">HO2</name>
    <name type="ordered locus">Os03g0395000</name>
    <name type="ordered locus">LOC_Os03g27770</name>
    <name type="ORF">OSJNBa0093I13.32</name>
    <name type="ORF">OSJNBb0004M10.4</name>
</gene>
<proteinExistence type="evidence at transcript level"/>
<organism>
    <name type="scientific">Oryza sativa subsp. japonica</name>
    <name type="common">Rice</name>
    <dbReference type="NCBI Taxonomy" id="39947"/>
    <lineage>
        <taxon>Eukaryota</taxon>
        <taxon>Viridiplantae</taxon>
        <taxon>Streptophyta</taxon>
        <taxon>Embryophyta</taxon>
        <taxon>Tracheophyta</taxon>
        <taxon>Spermatophyta</taxon>
        <taxon>Magnoliopsida</taxon>
        <taxon>Liliopsida</taxon>
        <taxon>Poales</taxon>
        <taxon>Poaceae</taxon>
        <taxon>BOP clade</taxon>
        <taxon>Oryzoideae</taxon>
        <taxon>Oryzeae</taxon>
        <taxon>Oryzinae</taxon>
        <taxon>Oryza</taxon>
        <taxon>Oryza sativa</taxon>
    </lineage>
</organism>